<feature type="peptide" id="PRO_0000043865" description="Antimicrobial peptide 1">
    <location>
        <begin position="1"/>
        <end position="27"/>
    </location>
</feature>
<name>XT1_XENTR</name>
<dbReference type="SMR" id="P84387"/>
<dbReference type="InParanoid" id="P84387"/>
<dbReference type="Proteomes" id="UP000008143">
    <property type="component" value="Unplaced"/>
</dbReference>
<dbReference type="GO" id="GO:0005576">
    <property type="term" value="C:extracellular region"/>
    <property type="evidence" value="ECO:0000314"/>
    <property type="project" value="UniProtKB"/>
</dbReference>
<dbReference type="GO" id="GO:0050832">
    <property type="term" value="P:defense response to fungus"/>
    <property type="evidence" value="ECO:0000314"/>
    <property type="project" value="UniProtKB"/>
</dbReference>
<dbReference type="GO" id="GO:0050829">
    <property type="term" value="P:defense response to Gram-negative bacterium"/>
    <property type="evidence" value="ECO:0000314"/>
    <property type="project" value="UniProtKB"/>
</dbReference>
<dbReference type="GO" id="GO:0050830">
    <property type="term" value="P:defense response to Gram-positive bacterium"/>
    <property type="evidence" value="ECO:0000314"/>
    <property type="project" value="UniProtKB"/>
</dbReference>
<dbReference type="GO" id="GO:0044179">
    <property type="term" value="P:hemolysis in another organism"/>
    <property type="evidence" value="ECO:0000314"/>
    <property type="project" value="UniProtKB"/>
</dbReference>
<comment type="function">
    <text evidence="1">Has very weak antimicrobial activity against Gram-positive bacterium S.aureus and Gram-negative bacterium E.coli and stronger activity against yeast C.albicans. Enhances the antibacterial activity of XT3. Has hemolytic activity against human red blood cells.</text>
</comment>
<comment type="subcellular location">
    <subcellularLocation>
        <location evidence="1">Secreted</location>
    </subcellularLocation>
</comment>
<comment type="tissue specificity">
    <text evidence="1">Expressed by the skin glands.</text>
</comment>
<comment type="mass spectrometry" mass="2852.1" error="0.6" method="Electrospray" evidence="1"/>
<reference evidence="2" key="1">
    <citation type="journal article" date="2001" name="Biochim. Biophys. Acta">
        <title>Antimicrobial peptides isolated from skin secretions of the diploid frog, Xenopus tropicalis (Pipidae).</title>
        <authorList>
            <person name="Ali M.F."/>
            <person name="Soto A."/>
            <person name="Knoop F.C."/>
            <person name="Conlon J.M."/>
        </authorList>
    </citation>
    <scope>PROTEIN SEQUENCE</scope>
    <scope>FUNCTION</scope>
    <scope>SUBCELLULAR LOCATION</scope>
    <scope>TISSUE SPECIFICITY</scope>
    <scope>MASS SPECTROMETRY</scope>
    <source>
        <tissue evidence="1">Skin secretion</tissue>
    </source>
</reference>
<evidence type="ECO:0000269" key="1">
    <source>
    </source>
</evidence>
<evidence type="ECO:0000305" key="2"/>
<organism>
    <name type="scientific">Xenopus tropicalis</name>
    <name type="common">Western clawed frog</name>
    <name type="synonym">Silurana tropicalis</name>
    <dbReference type="NCBI Taxonomy" id="8364"/>
    <lineage>
        <taxon>Eukaryota</taxon>
        <taxon>Metazoa</taxon>
        <taxon>Chordata</taxon>
        <taxon>Craniata</taxon>
        <taxon>Vertebrata</taxon>
        <taxon>Euteleostomi</taxon>
        <taxon>Amphibia</taxon>
        <taxon>Batrachia</taxon>
        <taxon>Anura</taxon>
        <taxon>Pipoidea</taxon>
        <taxon>Pipidae</taxon>
        <taxon>Xenopodinae</taxon>
        <taxon>Xenopus</taxon>
        <taxon>Silurana</taxon>
    </lineage>
</organism>
<accession>P84387</accession>
<proteinExistence type="evidence at protein level"/>
<keyword id="KW-0878">Amphibian defense peptide</keyword>
<keyword id="KW-0044">Antibiotic</keyword>
<keyword id="KW-0929">Antimicrobial</keyword>
<keyword id="KW-0204">Cytolysis</keyword>
<keyword id="KW-0903">Direct protein sequencing</keyword>
<keyword id="KW-0295">Fungicide</keyword>
<keyword id="KW-0354">Hemolysis</keyword>
<keyword id="KW-1185">Reference proteome</keyword>
<keyword id="KW-0964">Secreted</keyword>
<protein>
    <recommendedName>
        <fullName>Antimicrobial peptide 1</fullName>
    </recommendedName>
    <alternativeName>
        <fullName>XT-1</fullName>
    </alternativeName>
</protein>
<sequence length="27" mass="2853">GFLGPLLKLAAKGVAKVIPHLIPSRQQ</sequence>